<comment type="function">
    <text evidence="1">Catalyzes the initial step of the lipid cycle reactions in the biosynthesis of the cell wall peptidoglycan: transfers peptidoglycan precursor phospho-MurNAc-pentapeptide from UDP-MurNAc-pentapeptide onto the lipid carrier undecaprenyl phosphate, yielding undecaprenyl-pyrophosphoryl-MurNAc-pentapeptide, known as lipid I.</text>
</comment>
<comment type="catalytic activity">
    <reaction evidence="1">
        <text>UDP-N-acetyl-alpha-D-muramoyl-L-alanyl-gamma-D-glutamyl-meso-2,6-diaminopimeloyl-D-alanyl-D-alanine + di-trans,octa-cis-undecaprenyl phosphate = di-trans,octa-cis-undecaprenyl diphospho-N-acetyl-alpha-D-muramoyl-L-alanyl-D-glutamyl-meso-2,6-diaminopimeloyl-D-alanyl-D-alanine + UMP</text>
        <dbReference type="Rhea" id="RHEA:28386"/>
        <dbReference type="ChEBI" id="CHEBI:57865"/>
        <dbReference type="ChEBI" id="CHEBI:60392"/>
        <dbReference type="ChEBI" id="CHEBI:61386"/>
        <dbReference type="ChEBI" id="CHEBI:61387"/>
        <dbReference type="EC" id="2.7.8.13"/>
    </reaction>
</comment>
<comment type="cofactor">
    <cofactor evidence="1">
        <name>Mg(2+)</name>
        <dbReference type="ChEBI" id="CHEBI:18420"/>
    </cofactor>
</comment>
<comment type="pathway">
    <text evidence="1">Cell wall biogenesis; peptidoglycan biosynthesis.</text>
</comment>
<comment type="subcellular location">
    <subcellularLocation>
        <location evidence="1">Cell membrane</location>
        <topology evidence="1">Multi-pass membrane protein</topology>
    </subcellularLocation>
</comment>
<comment type="similarity">
    <text evidence="1">Belongs to the glycosyltransferase 4 family. MraY subfamily.</text>
</comment>
<accession>A6WCX7</accession>
<keyword id="KW-0131">Cell cycle</keyword>
<keyword id="KW-0132">Cell division</keyword>
<keyword id="KW-1003">Cell membrane</keyword>
<keyword id="KW-0133">Cell shape</keyword>
<keyword id="KW-0961">Cell wall biogenesis/degradation</keyword>
<keyword id="KW-0460">Magnesium</keyword>
<keyword id="KW-0472">Membrane</keyword>
<keyword id="KW-0479">Metal-binding</keyword>
<keyword id="KW-0573">Peptidoglycan synthesis</keyword>
<keyword id="KW-1185">Reference proteome</keyword>
<keyword id="KW-0808">Transferase</keyword>
<keyword id="KW-0812">Transmembrane</keyword>
<keyword id="KW-1133">Transmembrane helix</keyword>
<gene>
    <name evidence="1" type="primary">mraY</name>
    <name type="ordered locus">Krad_3202</name>
</gene>
<protein>
    <recommendedName>
        <fullName evidence="1">Phospho-N-acetylmuramoyl-pentapeptide-transferase</fullName>
        <ecNumber evidence="1">2.7.8.13</ecNumber>
    </recommendedName>
    <alternativeName>
        <fullName evidence="1">UDP-MurNAc-pentapeptide phosphotransferase</fullName>
    </alternativeName>
</protein>
<reference key="1">
    <citation type="journal article" date="2008" name="PLoS ONE">
        <title>Survival in nuclear waste, extreme resistance, and potential applications gleaned from the genome sequence of Kineococcus radiotolerans SRS30216.</title>
        <authorList>
            <person name="Bagwell C.E."/>
            <person name="Bhat S."/>
            <person name="Hawkins G.M."/>
            <person name="Smith B.W."/>
            <person name="Biswas T."/>
            <person name="Hoover T.R."/>
            <person name="Saunders E."/>
            <person name="Han C.S."/>
            <person name="Tsodikov O.V."/>
            <person name="Shimkets L.J."/>
        </authorList>
    </citation>
    <scope>NUCLEOTIDE SEQUENCE [LARGE SCALE GENOMIC DNA]</scope>
    <source>
        <strain>ATCC BAA-149 / DSM 14245 / SRS30216</strain>
    </source>
</reference>
<dbReference type="EC" id="2.7.8.13" evidence="1"/>
<dbReference type="EMBL" id="CP000750">
    <property type="protein sequence ID" value="ABS04666.1"/>
    <property type="molecule type" value="Genomic_DNA"/>
</dbReference>
<dbReference type="RefSeq" id="WP_012087080.1">
    <property type="nucleotide sequence ID" value="NC_009664.2"/>
</dbReference>
<dbReference type="SMR" id="A6WCX7"/>
<dbReference type="STRING" id="266940.Krad_3202"/>
<dbReference type="KEGG" id="kra:Krad_3202"/>
<dbReference type="eggNOG" id="COG0472">
    <property type="taxonomic scope" value="Bacteria"/>
</dbReference>
<dbReference type="HOGENOM" id="CLU_023982_0_1_11"/>
<dbReference type="OrthoDB" id="9805475at2"/>
<dbReference type="UniPathway" id="UPA00219"/>
<dbReference type="Proteomes" id="UP000001116">
    <property type="component" value="Chromosome"/>
</dbReference>
<dbReference type="GO" id="GO:0005886">
    <property type="term" value="C:plasma membrane"/>
    <property type="evidence" value="ECO:0007669"/>
    <property type="project" value="UniProtKB-SubCell"/>
</dbReference>
<dbReference type="GO" id="GO:0046872">
    <property type="term" value="F:metal ion binding"/>
    <property type="evidence" value="ECO:0007669"/>
    <property type="project" value="UniProtKB-KW"/>
</dbReference>
<dbReference type="GO" id="GO:0008963">
    <property type="term" value="F:phospho-N-acetylmuramoyl-pentapeptide-transferase activity"/>
    <property type="evidence" value="ECO:0007669"/>
    <property type="project" value="UniProtKB-UniRule"/>
</dbReference>
<dbReference type="GO" id="GO:0051992">
    <property type="term" value="F:UDP-N-acetylmuramoyl-L-alanyl-D-glutamyl-meso-2,6-diaminopimelyl-D-alanyl-D-alanine:undecaprenyl-phosphate transferase activity"/>
    <property type="evidence" value="ECO:0007669"/>
    <property type="project" value="RHEA"/>
</dbReference>
<dbReference type="GO" id="GO:0051301">
    <property type="term" value="P:cell division"/>
    <property type="evidence" value="ECO:0007669"/>
    <property type="project" value="UniProtKB-KW"/>
</dbReference>
<dbReference type="GO" id="GO:0071555">
    <property type="term" value="P:cell wall organization"/>
    <property type="evidence" value="ECO:0007669"/>
    <property type="project" value="UniProtKB-KW"/>
</dbReference>
<dbReference type="GO" id="GO:0009252">
    <property type="term" value="P:peptidoglycan biosynthetic process"/>
    <property type="evidence" value="ECO:0007669"/>
    <property type="project" value="UniProtKB-UniRule"/>
</dbReference>
<dbReference type="GO" id="GO:0008360">
    <property type="term" value="P:regulation of cell shape"/>
    <property type="evidence" value="ECO:0007669"/>
    <property type="project" value="UniProtKB-KW"/>
</dbReference>
<dbReference type="CDD" id="cd06852">
    <property type="entry name" value="GT_MraY"/>
    <property type="match status" value="1"/>
</dbReference>
<dbReference type="HAMAP" id="MF_00038">
    <property type="entry name" value="MraY"/>
    <property type="match status" value="1"/>
</dbReference>
<dbReference type="InterPro" id="IPR000715">
    <property type="entry name" value="Glycosyl_transferase_4"/>
</dbReference>
<dbReference type="InterPro" id="IPR003524">
    <property type="entry name" value="PNAcMuramoyl-5peptid_Trfase"/>
</dbReference>
<dbReference type="InterPro" id="IPR018480">
    <property type="entry name" value="PNAcMuramoyl-5peptid_Trfase_CS"/>
</dbReference>
<dbReference type="NCBIfam" id="TIGR00445">
    <property type="entry name" value="mraY"/>
    <property type="match status" value="1"/>
</dbReference>
<dbReference type="PANTHER" id="PTHR22926">
    <property type="entry name" value="PHOSPHO-N-ACETYLMURAMOYL-PENTAPEPTIDE-TRANSFERASE"/>
    <property type="match status" value="1"/>
</dbReference>
<dbReference type="PANTHER" id="PTHR22926:SF5">
    <property type="entry name" value="PHOSPHO-N-ACETYLMURAMOYL-PENTAPEPTIDE-TRANSFERASE HOMOLOG"/>
    <property type="match status" value="1"/>
</dbReference>
<dbReference type="Pfam" id="PF00953">
    <property type="entry name" value="Glycos_transf_4"/>
    <property type="match status" value="1"/>
</dbReference>
<dbReference type="Pfam" id="PF10555">
    <property type="entry name" value="MraY_sig1"/>
    <property type="match status" value="1"/>
</dbReference>
<dbReference type="PROSITE" id="PS01347">
    <property type="entry name" value="MRAY_1"/>
    <property type="match status" value="1"/>
</dbReference>
<dbReference type="PROSITE" id="PS01348">
    <property type="entry name" value="MRAY_2"/>
    <property type="match status" value="1"/>
</dbReference>
<evidence type="ECO:0000255" key="1">
    <source>
        <dbReference type="HAMAP-Rule" id="MF_00038"/>
    </source>
</evidence>
<organism>
    <name type="scientific">Kineococcus radiotolerans (strain ATCC BAA-149 / DSM 14245 / SRS30216)</name>
    <dbReference type="NCBI Taxonomy" id="266940"/>
    <lineage>
        <taxon>Bacteria</taxon>
        <taxon>Bacillati</taxon>
        <taxon>Actinomycetota</taxon>
        <taxon>Actinomycetes</taxon>
        <taxon>Kineosporiales</taxon>
        <taxon>Kineosporiaceae</taxon>
        <taxon>Kineococcus</taxon>
    </lineage>
</organism>
<sequence>MRTVLIAGAFSLVVSLFGTPLYIRWLVRRGYGQFVRDDGPTSHHTKRGTPTMGGVVIILAALLAYGAAHLFTGALPTVSGLLVLLLMTGLGVVGFLDDFLKISNQRSLGLTAKAKLAGQGLVGIVFAVLALQFPAAGKDGTTPASTHISVLRDTPLDLAVFGAVGGTVLFVVWALIITSAVSNGVNLTDGLDGLATGATTMVLAAYVLICTFQSNQSCYSLTEVEARCYEVRDPRDLAVVAAAVMGACFGFLWWNASPAKIFMGDTGSLALGGALAGLAILSRTQILLVLLGGLFVLITLSVILQVGSFKLTGKRIFRMAPLQHHFELAGWGEVTIVIRFWIIAGLFVFLGLGVFYAEWVTGA</sequence>
<feature type="chain" id="PRO_1000074546" description="Phospho-N-acetylmuramoyl-pentapeptide-transferase">
    <location>
        <begin position="1"/>
        <end position="363"/>
    </location>
</feature>
<feature type="transmembrane region" description="Helical" evidence="1">
    <location>
        <begin position="3"/>
        <end position="23"/>
    </location>
</feature>
<feature type="transmembrane region" description="Helical" evidence="1">
    <location>
        <begin position="55"/>
        <end position="75"/>
    </location>
</feature>
<feature type="transmembrane region" description="Helical" evidence="1">
    <location>
        <begin position="76"/>
        <end position="96"/>
    </location>
</feature>
<feature type="transmembrane region" description="Helical" evidence="1">
    <location>
        <begin position="116"/>
        <end position="136"/>
    </location>
</feature>
<feature type="transmembrane region" description="Helical" evidence="1">
    <location>
        <begin position="158"/>
        <end position="178"/>
    </location>
</feature>
<feature type="transmembrane region" description="Helical" evidence="1">
    <location>
        <begin position="190"/>
        <end position="210"/>
    </location>
</feature>
<feature type="transmembrane region" description="Helical" evidence="1">
    <location>
        <begin position="237"/>
        <end position="257"/>
    </location>
</feature>
<feature type="transmembrane region" description="Helical" evidence="1">
    <location>
        <begin position="261"/>
        <end position="281"/>
    </location>
</feature>
<feature type="transmembrane region" description="Helical" evidence="1">
    <location>
        <begin position="286"/>
        <end position="306"/>
    </location>
</feature>
<feature type="transmembrane region" description="Helical" evidence="1">
    <location>
        <begin position="340"/>
        <end position="360"/>
    </location>
</feature>
<name>MRAY_KINRD</name>
<proteinExistence type="inferred from homology"/>